<organism>
    <name type="scientific">Bacillus subtilis (strain 168)</name>
    <dbReference type="NCBI Taxonomy" id="224308"/>
    <lineage>
        <taxon>Bacteria</taxon>
        <taxon>Bacillati</taxon>
        <taxon>Bacillota</taxon>
        <taxon>Bacilli</taxon>
        <taxon>Bacillales</taxon>
        <taxon>Bacillaceae</taxon>
        <taxon>Bacillus</taxon>
    </lineage>
</organism>
<protein>
    <recommendedName>
        <fullName>Methyl-accepting chemotaxis protein McpB</fullName>
    </recommendedName>
    <alternativeName>
        <fullName>H3</fullName>
    </alternativeName>
</protein>
<reference key="1">
    <citation type="journal article" date="1994" name="J. Biol. Chem.">
        <title>Cloning and characterization of genes encoding methyl-accepting chemotaxis proteins in Bacillus subtilis.</title>
        <authorList>
            <person name="Hanlon D.W."/>
            <person name="Ordal G.W."/>
        </authorList>
    </citation>
    <scope>NUCLEOTIDE SEQUENCE [GENOMIC DNA]</scope>
    <scope>METHYLATION AT GLN-371; GLN-595; GLU-630 AND GLU-637</scope>
    <scope>DEAMIDATION AT GLN-371 AND GLN-595</scope>
    <scope>FUNCTION</scope>
    <source>
        <strain>168 / OI1085</strain>
    </source>
</reference>
<reference key="2">
    <citation type="journal article" date="1997" name="Nature">
        <title>The complete genome sequence of the Gram-positive bacterium Bacillus subtilis.</title>
        <authorList>
            <person name="Kunst F."/>
            <person name="Ogasawara N."/>
            <person name="Moszer I."/>
            <person name="Albertini A.M."/>
            <person name="Alloni G."/>
            <person name="Azevedo V."/>
            <person name="Bertero M.G."/>
            <person name="Bessieres P."/>
            <person name="Bolotin A."/>
            <person name="Borchert S."/>
            <person name="Borriss R."/>
            <person name="Boursier L."/>
            <person name="Brans A."/>
            <person name="Braun M."/>
            <person name="Brignell S.C."/>
            <person name="Bron S."/>
            <person name="Brouillet S."/>
            <person name="Bruschi C.V."/>
            <person name="Caldwell B."/>
            <person name="Capuano V."/>
            <person name="Carter N.M."/>
            <person name="Choi S.-K."/>
            <person name="Codani J.-J."/>
            <person name="Connerton I.F."/>
            <person name="Cummings N.J."/>
            <person name="Daniel R.A."/>
            <person name="Denizot F."/>
            <person name="Devine K.M."/>
            <person name="Duesterhoeft A."/>
            <person name="Ehrlich S.D."/>
            <person name="Emmerson P.T."/>
            <person name="Entian K.-D."/>
            <person name="Errington J."/>
            <person name="Fabret C."/>
            <person name="Ferrari E."/>
            <person name="Foulger D."/>
            <person name="Fritz C."/>
            <person name="Fujita M."/>
            <person name="Fujita Y."/>
            <person name="Fuma S."/>
            <person name="Galizzi A."/>
            <person name="Galleron N."/>
            <person name="Ghim S.-Y."/>
            <person name="Glaser P."/>
            <person name="Goffeau A."/>
            <person name="Golightly E.J."/>
            <person name="Grandi G."/>
            <person name="Guiseppi G."/>
            <person name="Guy B.J."/>
            <person name="Haga K."/>
            <person name="Haiech J."/>
            <person name="Harwood C.R."/>
            <person name="Henaut A."/>
            <person name="Hilbert H."/>
            <person name="Holsappel S."/>
            <person name="Hosono S."/>
            <person name="Hullo M.-F."/>
            <person name="Itaya M."/>
            <person name="Jones L.-M."/>
            <person name="Joris B."/>
            <person name="Karamata D."/>
            <person name="Kasahara Y."/>
            <person name="Klaerr-Blanchard M."/>
            <person name="Klein C."/>
            <person name="Kobayashi Y."/>
            <person name="Koetter P."/>
            <person name="Koningstein G."/>
            <person name="Krogh S."/>
            <person name="Kumano M."/>
            <person name="Kurita K."/>
            <person name="Lapidus A."/>
            <person name="Lardinois S."/>
            <person name="Lauber J."/>
            <person name="Lazarevic V."/>
            <person name="Lee S.-M."/>
            <person name="Levine A."/>
            <person name="Liu H."/>
            <person name="Masuda S."/>
            <person name="Mauel C."/>
            <person name="Medigue C."/>
            <person name="Medina N."/>
            <person name="Mellado R.P."/>
            <person name="Mizuno M."/>
            <person name="Moestl D."/>
            <person name="Nakai S."/>
            <person name="Noback M."/>
            <person name="Noone D."/>
            <person name="O'Reilly M."/>
            <person name="Ogawa K."/>
            <person name="Ogiwara A."/>
            <person name="Oudega B."/>
            <person name="Park S.-H."/>
            <person name="Parro V."/>
            <person name="Pohl T.M."/>
            <person name="Portetelle D."/>
            <person name="Porwollik S."/>
            <person name="Prescott A.M."/>
            <person name="Presecan E."/>
            <person name="Pujic P."/>
            <person name="Purnelle B."/>
            <person name="Rapoport G."/>
            <person name="Rey M."/>
            <person name="Reynolds S."/>
            <person name="Rieger M."/>
            <person name="Rivolta C."/>
            <person name="Rocha E."/>
            <person name="Roche B."/>
            <person name="Rose M."/>
            <person name="Sadaie Y."/>
            <person name="Sato T."/>
            <person name="Scanlan E."/>
            <person name="Schleich S."/>
            <person name="Schroeter R."/>
            <person name="Scoffone F."/>
            <person name="Sekiguchi J."/>
            <person name="Sekowska A."/>
            <person name="Seror S.J."/>
            <person name="Serror P."/>
            <person name="Shin B.-S."/>
            <person name="Soldo B."/>
            <person name="Sorokin A."/>
            <person name="Tacconi E."/>
            <person name="Takagi T."/>
            <person name="Takahashi H."/>
            <person name="Takemaru K."/>
            <person name="Takeuchi M."/>
            <person name="Tamakoshi A."/>
            <person name="Tanaka T."/>
            <person name="Terpstra P."/>
            <person name="Tognoni A."/>
            <person name="Tosato V."/>
            <person name="Uchiyama S."/>
            <person name="Vandenbol M."/>
            <person name="Vannier F."/>
            <person name="Vassarotti A."/>
            <person name="Viari A."/>
            <person name="Wambutt R."/>
            <person name="Wedler E."/>
            <person name="Wedler H."/>
            <person name="Weitzenegger T."/>
            <person name="Winters P."/>
            <person name="Wipat A."/>
            <person name="Yamamoto H."/>
            <person name="Yamane K."/>
            <person name="Yasumoto K."/>
            <person name="Yata K."/>
            <person name="Yoshida K."/>
            <person name="Yoshikawa H.-F."/>
            <person name="Zumstein E."/>
            <person name="Yoshikawa H."/>
            <person name="Danchin A."/>
        </authorList>
    </citation>
    <scope>NUCLEOTIDE SEQUENCE [LARGE SCALE GENOMIC DNA]</scope>
    <source>
        <strain>168</strain>
    </source>
</reference>
<reference key="3">
    <citation type="journal article" date="2009" name="Microbiology">
        <title>From a consortium sequence to a unified sequence: the Bacillus subtilis 168 reference genome a decade later.</title>
        <authorList>
            <person name="Barbe V."/>
            <person name="Cruveiller S."/>
            <person name="Kunst F."/>
            <person name="Lenoble P."/>
            <person name="Meurice G."/>
            <person name="Sekowska A."/>
            <person name="Vallenet D."/>
            <person name="Wang T."/>
            <person name="Moszer I."/>
            <person name="Medigue C."/>
            <person name="Danchin A."/>
        </authorList>
    </citation>
    <scope>SEQUENCE REVISION TO 360; 402 AND 450</scope>
</reference>
<reference key="4">
    <citation type="journal article" date="2000" name="J. Biol. Chem.">
        <title>Selective methylation changes on the Bacillus subtilis chemotaxis receptor McpB promote adaptation.</title>
        <authorList>
            <person name="Zimmer M.A."/>
            <person name="Tiu J."/>
            <person name="Collins M.A."/>
            <person name="Ordal G.W."/>
        </authorList>
    </citation>
    <scope>METHYLATION AT GLN-371; GLN-595; GLU-630 AND GLU-637</scope>
    <scope>DEAMIDATION AT GLN-371 AND 595</scope>
    <scope>MUTAGENESIS OF GLN-371; GLN-595; GLU-630 AND GLU-637</scope>
</reference>
<reference key="5">
    <citation type="journal article" date="2002" name="J. Biol. Chem.">
        <title>Bacillus subtilis CheD is a chemoreceptor modification enzyme required for chemotaxis.</title>
        <authorList>
            <person name="Kristich C.J."/>
            <person name="Ordal G.W."/>
        </authorList>
    </citation>
    <scope>DEAMIDATION BY CHED</scope>
</reference>
<reference key="6">
    <citation type="journal article" date="2013" name="Mol. Microbiol.">
        <title>Flotillins functionally organize the bacterial membrane.</title>
        <authorList>
            <person name="Bach J.N."/>
            <person name="Bramkamp M."/>
        </authorList>
    </citation>
    <scope>INTERACTION WITH FLOT</scope>
    <scope>SUBCELLULAR LOCATION</scope>
    <source>
        <strain>168</strain>
    </source>
</reference>
<keyword id="KW-1003">Cell membrane</keyword>
<keyword id="KW-0145">Chemotaxis</keyword>
<keyword id="KW-0472">Membrane</keyword>
<keyword id="KW-0488">Methylation</keyword>
<keyword id="KW-1185">Reference proteome</keyword>
<keyword id="KW-0807">Transducer</keyword>
<keyword id="KW-0812">Transmembrane</keyword>
<keyword id="KW-1133">Transmembrane helix</keyword>
<accession>P39215</accession>
<name>MCPB_BACSU</name>
<feature type="chain" id="PRO_0000110557" description="Methyl-accepting chemotaxis protein McpB">
    <location>
        <begin position="1"/>
        <end position="662"/>
    </location>
</feature>
<feature type="topological domain" description="Cytoplasmic" evidence="1">
    <location>
        <begin position="1"/>
        <end position="16"/>
    </location>
</feature>
<feature type="transmembrane region" description="Helical" evidence="1">
    <location>
        <begin position="17"/>
        <end position="37"/>
    </location>
</feature>
<feature type="topological domain" description="Extracellular" evidence="1">
    <location>
        <begin position="38"/>
        <end position="282"/>
    </location>
</feature>
<feature type="transmembrane region" description="Helical" evidence="1">
    <location>
        <begin position="283"/>
        <end position="303"/>
    </location>
</feature>
<feature type="topological domain" description="Cytoplasmic" evidence="1">
    <location>
        <begin position="304"/>
        <end position="662"/>
    </location>
</feature>
<feature type="domain" description="Cache">
    <location>
        <begin position="153"/>
        <end position="229"/>
    </location>
</feature>
<feature type="domain" description="HAMP" evidence="2">
    <location>
        <begin position="304"/>
        <end position="356"/>
    </location>
</feature>
<feature type="domain" description="Methyl-accepting transducer" evidence="3">
    <location>
        <begin position="375"/>
        <end position="611"/>
    </location>
</feature>
<feature type="modified residue" description="Glutamate methyl ester (Gln)" evidence="4 7">
    <location>
        <position position="371"/>
    </location>
</feature>
<feature type="modified residue" description="Glutamate methyl ester (Gln)" evidence="9">
    <location>
        <position position="595"/>
    </location>
</feature>
<feature type="modified residue" description="Glutamate methyl ester (Glu)" evidence="4 7">
    <location>
        <position position="630"/>
    </location>
</feature>
<feature type="modified residue" description="Glutamate methyl ester (Glu)" evidence="4 7">
    <location>
        <position position="637"/>
    </location>
</feature>
<feature type="mutagenesis site" description="Marked diminution of methanol upon both addition and removal of asparagine. No release of methanol upon asparagine addition but methanol release upon asparagine removal is not affected; when associated with D-630. Release of methanol upon both asparagine addition and removal; when associated with D-637. No methylation; when associated with D-630 and D-637." evidence="4">
    <original>Q</original>
    <variation>D</variation>
    <location>
        <position position="371"/>
    </location>
</feature>
<feature type="mutagenesis site" description="Wild-type production of methanol." evidence="4">
    <original>Q</original>
    <variation>D</variation>
    <location>
        <position position="595"/>
    </location>
</feature>
<feature type="mutagenesis site" description="Marked diminution of methanol upon both addition and removal of asparagine; methanol release delayed by about 1 minute compared to wild-type; adapts normally to addition of asparagine but fails to adapt to asparagine removal. No release of methanol upon asparagine addition but methanol release upon asparagine removal is not affected; when associated with D-371. Releases methanol upon asparagine addition but not upon asparagine removal; when associated with D-637. No methylation; when associated with D-371 and D-637." evidence="4">
    <original>E</original>
    <variation>D</variation>
    <location>
        <position position="630"/>
    </location>
</feature>
<feature type="mutagenesis site" description="Marked diminution of methanol upon both addition and removal of asparagine; fails to adapt to addition of asparagine. Release of methanol upon both asparagine addition and removal; when associated with D-371. Releases methanol upon asparagine addition but not upon asparagine removal; when associated with D-630. No methylation; when associated with D-371 and D-630." evidence="4">
    <original>E</original>
    <variation>D</variation>
    <location>
        <position position="637"/>
    </location>
</feature>
<feature type="sequence conflict" description="In Ref. 1; AAA20554." evidence="8" ref="1">
    <original>D</original>
    <variation>N</variation>
    <location>
        <position position="360"/>
    </location>
</feature>
<feature type="sequence conflict" description="In Ref. 1; AAA20554." evidence="8" ref="1">
    <original>E</original>
    <variation>R</variation>
    <location>
        <position position="402"/>
    </location>
</feature>
<feature type="sequence conflict" description="In Ref. 1; AAA20554." evidence="8" ref="1">
    <original>V</original>
    <variation>G</variation>
    <location>
        <position position="450"/>
    </location>
</feature>
<gene>
    <name type="primary">mcpB</name>
    <name type="ordered locus">BSU31260</name>
</gene>
<comment type="function">
    <text evidence="7">Chemotactic-signal transducers respond to changes in the concentration of attractants and repellents in the environment, transduce a signal from the outside to the inside of the cell, and facilitate sensory adaptation through the variation of the level of methylation. All amino acids serve as attractants in B.subtilis, they appear to cause an increase in the turnover methyl groups, leading to methylation of an unidentified acceptor, while repellents have been shown to cause a decrease in methyl group turnover. The methyl groups are added by a methyltransferase and removed by a methylesterase. McpB is required for taxis towards asparagine, aspartate, glutamine, and histidine.</text>
</comment>
<comment type="subunit">
    <text evidence="6">Interacts with FloT.</text>
</comment>
<comment type="subcellular location">
    <subcellularLocation>
        <location evidence="6">Cell membrane</location>
        <topology evidence="1">Multi-pass membrane protein</topology>
    </subcellularLocation>
    <subcellularLocation>
        <location evidence="6">Membrane raft</location>
        <topology evidence="1">Multi-pass membrane protein</topology>
    </subcellularLocation>
    <text evidence="6">Present in detergent-resistant membrane (DRM) fractions that may be equivalent to eukaryotic membrane rafts; these rafts include proteins involved in signaling, molecule trafficking and protein secretion.</text>
</comment>
<comment type="PTM">
    <text evidence="4 5 7">Some glutamine residues are deamidated to glutamate by CheD and subsequently methylated.</text>
</comment>
<comment type="PTM">
    <text>The demethylation is selective. Gln-371 is demethylated only upon asparagine addition whereas Glu-637 is demethylated only upon asparagine removal. Glu-630 appears indiscriminate and is demethylated upon both addition and removal of asparagine.</text>
</comment>
<comment type="miscellaneous">
    <text>Only chemotaxis towards asparagine is completely deficient in the absence of McpB.</text>
</comment>
<comment type="similarity">
    <text evidence="8">Belongs to the methyl-accepting chemotaxis (MCP) protein family.</text>
</comment>
<evidence type="ECO:0000255" key="1"/>
<evidence type="ECO:0000255" key="2">
    <source>
        <dbReference type="PROSITE-ProRule" id="PRU00102"/>
    </source>
</evidence>
<evidence type="ECO:0000255" key="3">
    <source>
        <dbReference type="PROSITE-ProRule" id="PRU00284"/>
    </source>
</evidence>
<evidence type="ECO:0000269" key="4">
    <source>
    </source>
</evidence>
<evidence type="ECO:0000269" key="5">
    <source>
    </source>
</evidence>
<evidence type="ECO:0000269" key="6">
    <source>
    </source>
</evidence>
<evidence type="ECO:0000269" key="7">
    <source>
    </source>
</evidence>
<evidence type="ECO:0000305" key="8"/>
<evidence type="ECO:0000305" key="9">
    <source>
    </source>
</evidence>
<sequence length="662" mass="71901">MKTFINWLKKPSISKKLIVSFIAILIIPILILEFSSYRSASGKLDQEIMGNAKNSVDTFNTTVTNDLGEKAKAVTFFSESLKRSAFKGKSNQEEIKAKFSQYVSINQGVARIYGGADNGTYVQAPKEKLPEGYDPRQRPWYQDAMKAGGEIVVTDPYVAASDGSMVITIAQELKDGSGVVAMDITIDKLLEQMKQIKVGKEGYAFIATKNKTYVAHKNHKAGEKLSGDWVAKMYANDSGELQYTLNNEDKKMTYTTNELTGWKIAGTMYMDEIKDASKSVLTTGMIVLIASIVAGGILILFIVRSITKPLKRLVQSSKTISRGDLTETIEIHSKDELGELGESFNEMGQSLRSLISAIQDSVNNVAASSEQLTASAGQTSKATEHITMAIEQFSNGNEEQSEKVESSSHQLNLMNEGLQQVSQTSSDITKASIQSTEIAGTGEKFVQQTVGQMNSINQSVQQAEAVVKGLEGKSKDITSILRVINGIADQTNLLALNAAIEAARAGESGRGFSVVAEEVRKLAVQSADSAKEIEKLIQEIVAEIDTSLHMFKEVNQEVQSGLVVTDNTKESFQSIFSMTNEIAGKLQTMNSTVEQLSDRSQHVSAAVSGIADVSKESSASIQDIAASAEEQLASMEEISSSATTLAQMAEELRDLTKQFKIE</sequence>
<dbReference type="EMBL" id="L29189">
    <property type="protein sequence ID" value="AAA20554.1"/>
    <property type="molecule type" value="Genomic_DNA"/>
</dbReference>
<dbReference type="EMBL" id="AL009126">
    <property type="protein sequence ID" value="CAB15104.2"/>
    <property type="molecule type" value="Genomic_DNA"/>
</dbReference>
<dbReference type="PIR" id="A54078">
    <property type="entry name" value="A54078"/>
</dbReference>
<dbReference type="RefSeq" id="NP_391004.2">
    <property type="nucleotide sequence ID" value="NC_000964.3"/>
</dbReference>
<dbReference type="RefSeq" id="WP_003243461.1">
    <property type="nucleotide sequence ID" value="NZ_OZ025638.1"/>
</dbReference>
<dbReference type="SMR" id="P39215"/>
<dbReference type="FunCoup" id="P39215">
    <property type="interactions" value="202"/>
</dbReference>
<dbReference type="IntAct" id="P39215">
    <property type="interactions" value="2"/>
</dbReference>
<dbReference type="STRING" id="224308.BSU31260"/>
<dbReference type="jPOST" id="P39215"/>
<dbReference type="PaxDb" id="224308-BSU31260"/>
<dbReference type="EnsemblBacteria" id="CAB15104">
    <property type="protein sequence ID" value="CAB15104"/>
    <property type="gene ID" value="BSU_31260"/>
</dbReference>
<dbReference type="GeneID" id="937155"/>
<dbReference type="KEGG" id="bsu:BSU31260"/>
<dbReference type="PATRIC" id="fig|224308.179.peg.3386"/>
<dbReference type="eggNOG" id="COG0840">
    <property type="taxonomic scope" value="Bacteria"/>
</dbReference>
<dbReference type="InParanoid" id="P39215"/>
<dbReference type="OrthoDB" id="9760371at2"/>
<dbReference type="PhylomeDB" id="P39215"/>
<dbReference type="BioCyc" id="BSUB:BSU31260-MONOMER"/>
<dbReference type="Proteomes" id="UP000001570">
    <property type="component" value="Chromosome"/>
</dbReference>
<dbReference type="GO" id="GO:0045121">
    <property type="term" value="C:membrane raft"/>
    <property type="evidence" value="ECO:0007669"/>
    <property type="project" value="UniProtKB-SubCell"/>
</dbReference>
<dbReference type="GO" id="GO:0005886">
    <property type="term" value="C:plasma membrane"/>
    <property type="evidence" value="ECO:0007669"/>
    <property type="project" value="UniProtKB-SubCell"/>
</dbReference>
<dbReference type="GO" id="GO:0006935">
    <property type="term" value="P:chemotaxis"/>
    <property type="evidence" value="ECO:0000318"/>
    <property type="project" value="GO_Central"/>
</dbReference>
<dbReference type="GO" id="GO:0007165">
    <property type="term" value="P:signal transduction"/>
    <property type="evidence" value="ECO:0007669"/>
    <property type="project" value="UniProtKB-KW"/>
</dbReference>
<dbReference type="CDD" id="cd06225">
    <property type="entry name" value="HAMP"/>
    <property type="match status" value="1"/>
</dbReference>
<dbReference type="CDD" id="cd11386">
    <property type="entry name" value="MCP_signal"/>
    <property type="match status" value="1"/>
</dbReference>
<dbReference type="CDD" id="cd12913">
    <property type="entry name" value="PDC1_MCP_like"/>
    <property type="match status" value="1"/>
</dbReference>
<dbReference type="CDD" id="cd12912">
    <property type="entry name" value="PDC2_MCP_like"/>
    <property type="match status" value="1"/>
</dbReference>
<dbReference type="FunFam" id="1.10.8.500:FF:000002">
    <property type="entry name" value="Methyl-accepting chemotaxis protein"/>
    <property type="match status" value="1"/>
</dbReference>
<dbReference type="FunFam" id="1.10.287.950:FF:000001">
    <property type="entry name" value="Methyl-accepting chemotaxis sensory transducer"/>
    <property type="match status" value="1"/>
</dbReference>
<dbReference type="Gene3D" id="1.10.8.500">
    <property type="entry name" value="HAMP domain in histidine kinase"/>
    <property type="match status" value="1"/>
</dbReference>
<dbReference type="Gene3D" id="1.10.287.950">
    <property type="entry name" value="Methyl-accepting chemotaxis protein"/>
    <property type="match status" value="1"/>
</dbReference>
<dbReference type="Gene3D" id="3.30.450.20">
    <property type="entry name" value="PAS domain"/>
    <property type="match status" value="2"/>
</dbReference>
<dbReference type="InterPro" id="IPR033479">
    <property type="entry name" value="dCache_1"/>
</dbReference>
<dbReference type="InterPro" id="IPR003660">
    <property type="entry name" value="HAMP_dom"/>
</dbReference>
<dbReference type="InterPro" id="IPR004089">
    <property type="entry name" value="MCPsignal_dom"/>
</dbReference>
<dbReference type="InterPro" id="IPR029151">
    <property type="entry name" value="Sensor-like_sf"/>
</dbReference>
<dbReference type="InterPro" id="IPR003122">
    <property type="entry name" value="Tar_rcpt_lig-bd"/>
</dbReference>
<dbReference type="PANTHER" id="PTHR32089">
    <property type="entry name" value="METHYL-ACCEPTING CHEMOTAXIS PROTEIN MCPB"/>
    <property type="match status" value="1"/>
</dbReference>
<dbReference type="PANTHER" id="PTHR32089:SF114">
    <property type="entry name" value="METHYL-ACCEPTING CHEMOTAXIS PROTEIN MCPB"/>
    <property type="match status" value="1"/>
</dbReference>
<dbReference type="Pfam" id="PF02743">
    <property type="entry name" value="dCache_1"/>
    <property type="match status" value="1"/>
</dbReference>
<dbReference type="Pfam" id="PF00672">
    <property type="entry name" value="HAMP"/>
    <property type="match status" value="1"/>
</dbReference>
<dbReference type="Pfam" id="PF00015">
    <property type="entry name" value="MCPsignal"/>
    <property type="match status" value="1"/>
</dbReference>
<dbReference type="SMART" id="SM00304">
    <property type="entry name" value="HAMP"/>
    <property type="match status" value="1"/>
</dbReference>
<dbReference type="SMART" id="SM00283">
    <property type="entry name" value="MA"/>
    <property type="match status" value="1"/>
</dbReference>
<dbReference type="SMART" id="SM00319">
    <property type="entry name" value="TarH"/>
    <property type="match status" value="1"/>
</dbReference>
<dbReference type="SUPFAM" id="SSF58104">
    <property type="entry name" value="Methyl-accepting chemotaxis protein (MCP) signaling domain"/>
    <property type="match status" value="1"/>
</dbReference>
<dbReference type="SUPFAM" id="SSF103190">
    <property type="entry name" value="Sensory domain-like"/>
    <property type="match status" value="1"/>
</dbReference>
<dbReference type="PROSITE" id="PS50111">
    <property type="entry name" value="CHEMOTAXIS_TRANSDUC_2"/>
    <property type="match status" value="1"/>
</dbReference>
<dbReference type="PROSITE" id="PS50885">
    <property type="entry name" value="HAMP"/>
    <property type="match status" value="1"/>
</dbReference>
<proteinExistence type="evidence at protein level"/>